<evidence type="ECO:0000256" key="1">
    <source>
        <dbReference type="SAM" id="MobiDB-lite"/>
    </source>
</evidence>
<sequence>MQANHSVSYLYESSTSKRSNGLFSQTQKQGSFQKALSQTQEEIEDEDLMVDLNTGSLTPVKLKYWTQMSAMTEKFGKL</sequence>
<name>YK068_YEAST</name>
<gene>
    <name type="ordered locus">YKL068W-A</name>
</gene>
<accession>Q3E826</accession>
<accession>D6VXL8</accession>
<dbReference type="EMBL" id="Z28069">
    <property type="status" value="NOT_ANNOTATED_CDS"/>
    <property type="molecule type" value="Genomic_DNA"/>
</dbReference>
<dbReference type="EMBL" id="BK006944">
    <property type="protein sequence ID" value="DAA09088.1"/>
    <property type="molecule type" value="Genomic_DNA"/>
</dbReference>
<dbReference type="RefSeq" id="NP_878111.1">
    <property type="nucleotide sequence ID" value="NM_001184534.1"/>
</dbReference>
<dbReference type="BioGRID" id="37083">
    <property type="interactions" value="15"/>
</dbReference>
<dbReference type="FunCoup" id="Q3E826">
    <property type="interactions" value="17"/>
</dbReference>
<dbReference type="STRING" id="4932.YKL068W-A"/>
<dbReference type="iPTMnet" id="Q3E826"/>
<dbReference type="PaxDb" id="4932-YKL068W-A"/>
<dbReference type="PeptideAtlas" id="Q3E826"/>
<dbReference type="EnsemblFungi" id="YKL068W-A_mRNA">
    <property type="protein sequence ID" value="YKL068W-A"/>
    <property type="gene ID" value="YKL068W-A"/>
</dbReference>
<dbReference type="GeneID" id="1500487"/>
<dbReference type="KEGG" id="sce:YKL068W-A"/>
<dbReference type="AGR" id="SGD:S000028524"/>
<dbReference type="SGD" id="S000028524">
    <property type="gene designation" value="YKL068W-A"/>
</dbReference>
<dbReference type="VEuPathDB" id="FungiDB:YKL068W-A"/>
<dbReference type="HOGENOM" id="CLU_2623894_0_0_1"/>
<dbReference type="InParanoid" id="Q3E826"/>
<dbReference type="OrthoDB" id="4070339at2759"/>
<dbReference type="BioCyc" id="YEAST:G3O-32098-MONOMER"/>
<dbReference type="BioGRID-ORCS" id="1500487">
    <property type="hits" value="2 hits in 10 CRISPR screens"/>
</dbReference>
<dbReference type="PRO" id="PR:Q3E826"/>
<dbReference type="Proteomes" id="UP000002311">
    <property type="component" value="Chromosome XI"/>
</dbReference>
<dbReference type="RNAct" id="Q3E826">
    <property type="molecule type" value="protein"/>
</dbReference>
<protein>
    <recommendedName>
        <fullName>Uncharacterized protein YKL068W-A</fullName>
    </recommendedName>
</protein>
<proteinExistence type="predicted"/>
<feature type="chain" id="PRO_0000245421" description="Uncharacterized protein YKL068W-A">
    <location>
        <begin position="1"/>
        <end position="78"/>
    </location>
</feature>
<feature type="region of interest" description="Disordered" evidence="1">
    <location>
        <begin position="1"/>
        <end position="28"/>
    </location>
</feature>
<organism>
    <name type="scientific">Saccharomyces cerevisiae (strain ATCC 204508 / S288c)</name>
    <name type="common">Baker's yeast</name>
    <dbReference type="NCBI Taxonomy" id="559292"/>
    <lineage>
        <taxon>Eukaryota</taxon>
        <taxon>Fungi</taxon>
        <taxon>Dikarya</taxon>
        <taxon>Ascomycota</taxon>
        <taxon>Saccharomycotina</taxon>
        <taxon>Saccharomycetes</taxon>
        <taxon>Saccharomycetales</taxon>
        <taxon>Saccharomycetaceae</taxon>
        <taxon>Saccharomyces</taxon>
    </lineage>
</organism>
<reference key="1">
    <citation type="journal article" date="1994" name="Nature">
        <title>Complete DNA sequence of yeast chromosome XI.</title>
        <authorList>
            <person name="Dujon B."/>
            <person name="Alexandraki D."/>
            <person name="Andre B."/>
            <person name="Ansorge W."/>
            <person name="Baladron V."/>
            <person name="Ballesta J.P.G."/>
            <person name="Banrevi A."/>
            <person name="Bolle P.-A."/>
            <person name="Bolotin-Fukuhara M."/>
            <person name="Bossier P."/>
            <person name="Bou G."/>
            <person name="Boyer J."/>
            <person name="Buitrago M.J."/>
            <person name="Cheret G."/>
            <person name="Colleaux L."/>
            <person name="Daignan-Fornier B."/>
            <person name="del Rey F."/>
            <person name="Dion C."/>
            <person name="Domdey H."/>
            <person name="Duesterhoeft A."/>
            <person name="Duesterhus S."/>
            <person name="Entian K.-D."/>
            <person name="Erfle H."/>
            <person name="Esteban P.F."/>
            <person name="Feldmann H."/>
            <person name="Fernandes L."/>
            <person name="Fobo G.M."/>
            <person name="Fritz C."/>
            <person name="Fukuhara H."/>
            <person name="Gabel C."/>
            <person name="Gaillon L."/>
            <person name="Garcia-Cantalejo J.M."/>
            <person name="Garcia-Ramirez J.J."/>
            <person name="Gent M.E."/>
            <person name="Ghazvini M."/>
            <person name="Goffeau A."/>
            <person name="Gonzalez A."/>
            <person name="Grothues D."/>
            <person name="Guerreiro P."/>
            <person name="Hegemann J.H."/>
            <person name="Hewitt N."/>
            <person name="Hilger F."/>
            <person name="Hollenberg C.P."/>
            <person name="Horaitis O."/>
            <person name="Indge K.J."/>
            <person name="Jacquier A."/>
            <person name="James C.M."/>
            <person name="Jauniaux J.-C."/>
            <person name="Jimenez A."/>
            <person name="Keuchel H."/>
            <person name="Kirchrath L."/>
            <person name="Kleine K."/>
            <person name="Koetter P."/>
            <person name="Legrain P."/>
            <person name="Liebl S."/>
            <person name="Louis E.J."/>
            <person name="Maia e Silva A."/>
            <person name="Marck C."/>
            <person name="Monnier A.-L."/>
            <person name="Moestl D."/>
            <person name="Mueller S."/>
            <person name="Obermaier B."/>
            <person name="Oliver S.G."/>
            <person name="Pallier C."/>
            <person name="Pascolo S."/>
            <person name="Pfeiffer F."/>
            <person name="Philippsen P."/>
            <person name="Planta R.J."/>
            <person name="Pohl F.M."/>
            <person name="Pohl T.M."/>
            <person name="Poehlmann R."/>
            <person name="Portetelle D."/>
            <person name="Purnelle B."/>
            <person name="Puzos V."/>
            <person name="Ramezani Rad M."/>
            <person name="Rasmussen S.W."/>
            <person name="Remacha M.A."/>
            <person name="Revuelta J.L."/>
            <person name="Richard G.-F."/>
            <person name="Rieger M."/>
            <person name="Rodrigues-Pousada C."/>
            <person name="Rose M."/>
            <person name="Rupp T."/>
            <person name="Santos M.A."/>
            <person name="Schwager C."/>
            <person name="Sensen C."/>
            <person name="Skala J."/>
            <person name="Soares H."/>
            <person name="Sor F."/>
            <person name="Stegemann J."/>
            <person name="Tettelin H."/>
            <person name="Thierry A."/>
            <person name="Tzermia M."/>
            <person name="Urrestarazu L.A."/>
            <person name="van Dyck L."/>
            <person name="van Vliet-Reedijk J.C."/>
            <person name="Valens M."/>
            <person name="Vandenbol M."/>
            <person name="Vilela C."/>
            <person name="Vissers S."/>
            <person name="von Wettstein D."/>
            <person name="Voss H."/>
            <person name="Wiemann S."/>
            <person name="Xu G."/>
            <person name="Zimmermann J."/>
            <person name="Haasemann M."/>
            <person name="Becker I."/>
            <person name="Mewes H.-W."/>
        </authorList>
    </citation>
    <scope>NUCLEOTIDE SEQUENCE [LARGE SCALE GENOMIC DNA]</scope>
    <source>
        <strain>ATCC 204508 / S288c</strain>
    </source>
</reference>
<reference key="2">
    <citation type="journal article" date="2014" name="G3 (Bethesda)">
        <title>The reference genome sequence of Saccharomyces cerevisiae: Then and now.</title>
        <authorList>
            <person name="Engel S.R."/>
            <person name="Dietrich F.S."/>
            <person name="Fisk D.G."/>
            <person name="Binkley G."/>
            <person name="Balakrishnan R."/>
            <person name="Costanzo M.C."/>
            <person name="Dwight S.S."/>
            <person name="Hitz B.C."/>
            <person name="Karra K."/>
            <person name="Nash R.S."/>
            <person name="Weng S."/>
            <person name="Wong E.D."/>
            <person name="Lloyd P."/>
            <person name="Skrzypek M.S."/>
            <person name="Miyasato S.R."/>
            <person name="Simison M."/>
            <person name="Cherry J.M."/>
        </authorList>
    </citation>
    <scope>GENOME REANNOTATION</scope>
    <source>
        <strain>ATCC 204508 / S288c</strain>
    </source>
</reference>
<reference key="3">
    <citation type="journal article" date="2003" name="Genome Biol.">
        <title>Reinvestigation of the Saccharomyces cerevisiae genome annotation by comparison to the genome of a related fungus: Ashbya gossypii.</title>
        <authorList>
            <person name="Brachat S."/>
            <person name="Dietrich F.S."/>
            <person name="Voegeli S."/>
            <person name="Zhang Z."/>
            <person name="Stuart L."/>
            <person name="Lerch A."/>
            <person name="Gates K."/>
            <person name="Gaffney T.D."/>
            <person name="Philippsen P."/>
        </authorList>
    </citation>
    <scope>GENOME REANNOTATION</scope>
</reference>
<keyword id="KW-1185">Reference proteome</keyword>